<protein>
    <recommendedName>
        <fullName evidence="1">ATP synthase subunit a, chloroplastic</fullName>
    </recommendedName>
    <alternativeName>
        <fullName evidence="1">ATP synthase F0 sector subunit a</fullName>
    </alternativeName>
    <alternativeName>
        <fullName evidence="1">F-ATPase subunit IV</fullName>
    </alternativeName>
</protein>
<gene>
    <name evidence="1" type="primary">atpI</name>
    <name type="ordered locus">CsCp014</name>
</gene>
<sequence>MNILLCSINTQKGLYDISGVEVGQHLYWQIGGFQVHAQVLITSWVVIAILLGSAIIAVRNPQTIPTDGQNFFEYVLEFIRDVSKTQIGEEYGPWVPFIGTMFLFIFVSNWSGALLPWKIIQLPHGELAAPTNDINTTVALALLTSVAYFYAGLSKKGLSYFGKYIQPTPILLPINILEDFTKPLSLSFRLFGNILADELVVVVLVSLVPLVVPIPVMFLGLFTSGIQALIFATLAAAYIGESMEGHH</sequence>
<feature type="chain" id="PRO_0000362547" description="ATP synthase subunit a, chloroplastic">
    <location>
        <begin position="1"/>
        <end position="247"/>
    </location>
</feature>
<feature type="transmembrane region" description="Helical" evidence="1">
    <location>
        <begin position="38"/>
        <end position="58"/>
    </location>
</feature>
<feature type="transmembrane region" description="Helical" evidence="1">
    <location>
        <begin position="95"/>
        <end position="115"/>
    </location>
</feature>
<feature type="transmembrane region" description="Helical" evidence="1">
    <location>
        <begin position="134"/>
        <end position="154"/>
    </location>
</feature>
<feature type="transmembrane region" description="Helical" evidence="1">
    <location>
        <begin position="199"/>
        <end position="219"/>
    </location>
</feature>
<feature type="transmembrane region" description="Helical" evidence="1">
    <location>
        <begin position="220"/>
        <end position="240"/>
    </location>
</feature>
<proteinExistence type="inferred from homology"/>
<accession>Q4VZP5</accession>
<organism>
    <name type="scientific">Cucumis sativus</name>
    <name type="common">Cucumber</name>
    <dbReference type="NCBI Taxonomy" id="3659"/>
    <lineage>
        <taxon>Eukaryota</taxon>
        <taxon>Viridiplantae</taxon>
        <taxon>Streptophyta</taxon>
        <taxon>Embryophyta</taxon>
        <taxon>Tracheophyta</taxon>
        <taxon>Spermatophyta</taxon>
        <taxon>Magnoliopsida</taxon>
        <taxon>eudicotyledons</taxon>
        <taxon>Gunneridae</taxon>
        <taxon>Pentapetalae</taxon>
        <taxon>rosids</taxon>
        <taxon>fabids</taxon>
        <taxon>Cucurbitales</taxon>
        <taxon>Cucurbitaceae</taxon>
        <taxon>Benincaseae</taxon>
        <taxon>Cucumis</taxon>
    </lineage>
</organism>
<name>ATPI_CUCSA</name>
<evidence type="ECO:0000255" key="1">
    <source>
        <dbReference type="HAMAP-Rule" id="MF_01393"/>
    </source>
</evidence>
<keyword id="KW-0066">ATP synthesis</keyword>
<keyword id="KW-0138">CF(0)</keyword>
<keyword id="KW-0150">Chloroplast</keyword>
<keyword id="KW-0375">Hydrogen ion transport</keyword>
<keyword id="KW-0406">Ion transport</keyword>
<keyword id="KW-0472">Membrane</keyword>
<keyword id="KW-0934">Plastid</keyword>
<keyword id="KW-0793">Thylakoid</keyword>
<keyword id="KW-0812">Transmembrane</keyword>
<keyword id="KW-1133">Transmembrane helix</keyword>
<keyword id="KW-0813">Transport</keyword>
<geneLocation type="chloroplast"/>
<dbReference type="EMBL" id="AJ970307">
    <property type="protein sequence ID" value="CAJ00746.1"/>
    <property type="molecule type" value="Genomic_DNA"/>
</dbReference>
<dbReference type="EMBL" id="DQ119058">
    <property type="status" value="NOT_ANNOTATED_CDS"/>
    <property type="molecule type" value="Genomic_DNA"/>
</dbReference>
<dbReference type="EMBL" id="DQ865975">
    <property type="protein sequence ID" value="ABI97405.1"/>
    <property type="molecule type" value="Genomic_DNA"/>
</dbReference>
<dbReference type="EMBL" id="DQ865976">
    <property type="protein sequence ID" value="ABI98733.1"/>
    <property type="molecule type" value="Genomic_DNA"/>
</dbReference>
<dbReference type="RefSeq" id="YP_247587.1">
    <property type="nucleotide sequence ID" value="NC_007144.1"/>
</dbReference>
<dbReference type="SMR" id="Q4VZP5"/>
<dbReference type="GeneID" id="3429379"/>
<dbReference type="KEGG" id="csv:3429379"/>
<dbReference type="OrthoDB" id="2303at2759"/>
<dbReference type="GO" id="GO:0009535">
    <property type="term" value="C:chloroplast thylakoid membrane"/>
    <property type="evidence" value="ECO:0007669"/>
    <property type="project" value="UniProtKB-SubCell"/>
</dbReference>
<dbReference type="GO" id="GO:0005886">
    <property type="term" value="C:plasma membrane"/>
    <property type="evidence" value="ECO:0007669"/>
    <property type="project" value="UniProtKB-UniRule"/>
</dbReference>
<dbReference type="GO" id="GO:0045259">
    <property type="term" value="C:proton-transporting ATP synthase complex"/>
    <property type="evidence" value="ECO:0007669"/>
    <property type="project" value="UniProtKB-KW"/>
</dbReference>
<dbReference type="GO" id="GO:0046933">
    <property type="term" value="F:proton-transporting ATP synthase activity, rotational mechanism"/>
    <property type="evidence" value="ECO:0007669"/>
    <property type="project" value="UniProtKB-UniRule"/>
</dbReference>
<dbReference type="CDD" id="cd00310">
    <property type="entry name" value="ATP-synt_Fo_a_6"/>
    <property type="match status" value="1"/>
</dbReference>
<dbReference type="FunFam" id="1.20.120.220:FF:000001">
    <property type="entry name" value="ATP synthase subunit a, chloroplastic"/>
    <property type="match status" value="1"/>
</dbReference>
<dbReference type="Gene3D" id="1.20.120.220">
    <property type="entry name" value="ATP synthase, F0 complex, subunit A"/>
    <property type="match status" value="1"/>
</dbReference>
<dbReference type="HAMAP" id="MF_01393">
    <property type="entry name" value="ATP_synth_a_bact"/>
    <property type="match status" value="1"/>
</dbReference>
<dbReference type="InterPro" id="IPR045082">
    <property type="entry name" value="ATP_syn_F0_a_bact/chloroplast"/>
</dbReference>
<dbReference type="InterPro" id="IPR000568">
    <property type="entry name" value="ATP_synth_F0_asu"/>
</dbReference>
<dbReference type="InterPro" id="IPR023011">
    <property type="entry name" value="ATP_synth_F0_asu_AS"/>
</dbReference>
<dbReference type="InterPro" id="IPR035908">
    <property type="entry name" value="F0_ATP_A_sf"/>
</dbReference>
<dbReference type="NCBIfam" id="TIGR01131">
    <property type="entry name" value="ATP_synt_6_or_A"/>
    <property type="match status" value="1"/>
</dbReference>
<dbReference type="PANTHER" id="PTHR42823">
    <property type="entry name" value="ATP SYNTHASE SUBUNIT A, CHLOROPLASTIC"/>
    <property type="match status" value="1"/>
</dbReference>
<dbReference type="PANTHER" id="PTHR42823:SF3">
    <property type="entry name" value="ATP SYNTHASE SUBUNIT A, CHLOROPLASTIC"/>
    <property type="match status" value="1"/>
</dbReference>
<dbReference type="Pfam" id="PF00119">
    <property type="entry name" value="ATP-synt_A"/>
    <property type="match status" value="1"/>
</dbReference>
<dbReference type="PRINTS" id="PR00123">
    <property type="entry name" value="ATPASEA"/>
</dbReference>
<dbReference type="SUPFAM" id="SSF81336">
    <property type="entry name" value="F1F0 ATP synthase subunit A"/>
    <property type="match status" value="1"/>
</dbReference>
<dbReference type="PROSITE" id="PS00449">
    <property type="entry name" value="ATPASE_A"/>
    <property type="match status" value="1"/>
</dbReference>
<comment type="function">
    <text evidence="1">Key component of the proton channel; it plays a direct role in the translocation of protons across the membrane.</text>
</comment>
<comment type="subunit">
    <text evidence="1">F-type ATPases have 2 components, CF(1) - the catalytic core - and CF(0) - the membrane proton channel. CF(1) has five subunits: alpha(3), beta(3), gamma(1), delta(1), epsilon(1). CF(0) has four main subunits: a, b, b' and c.</text>
</comment>
<comment type="subcellular location">
    <subcellularLocation>
        <location evidence="1">Plastid</location>
        <location evidence="1">Chloroplast thylakoid membrane</location>
        <topology evidence="1">Multi-pass membrane protein</topology>
    </subcellularLocation>
</comment>
<comment type="similarity">
    <text evidence="1">Belongs to the ATPase A chain family.</text>
</comment>
<reference key="1">
    <citation type="journal article" date="2006" name="Plant Cell Rep.">
        <title>Complete sequence and organization of the cucumber (Cucumis sativus L. cv. Baekmibaekdadagi) chloroplast genome.</title>
        <authorList>
            <person name="Kim J.-S."/>
            <person name="Jung J.D."/>
            <person name="Lee J.-A."/>
            <person name="Park H.-W."/>
            <person name="Oh K.-H."/>
            <person name="Jeong W.J."/>
            <person name="Choi D.-W."/>
            <person name="Liu J.R."/>
            <person name="Cho K.Y."/>
        </authorList>
    </citation>
    <scope>NUCLEOTIDE SEQUENCE [LARGE SCALE GENOMIC DNA]</scope>
    <source>
        <strain>cv. Baekmibaekdadagi</strain>
    </source>
</reference>
<reference key="2">
    <citation type="journal article" date="2007" name="Cell. Mol. Biol. Lett.">
        <title>The complete structure of the cucumber (Cucumis sativus L.) chloroplast genome: its composition and comparative analysis.</title>
        <authorList>
            <person name="Plader W.W."/>
            <person name="Yukawa Y."/>
            <person name="Sugiura M."/>
            <person name="Malepszy S."/>
        </authorList>
    </citation>
    <scope>NUCLEOTIDE SEQUENCE [LARGE SCALE GENOMIC DNA]</scope>
    <source>
        <strain>cv. Borszczagowski</strain>
    </source>
</reference>
<reference key="3">
    <citation type="journal article" date="2007" name="Genome">
        <title>Sequencing cucumber (Cucumis sativus L.) chloroplast genomes identifies differences between chilling-tolerant and -susceptible cucumber lines.</title>
        <authorList>
            <person name="Chung S.-M."/>
            <person name="Gordon V.S."/>
            <person name="Staub J.E."/>
        </authorList>
    </citation>
    <scope>NUCLEOTIDE SEQUENCE [LARGE SCALE GENOMIC DNA]</scope>
    <source>
        <strain>cv. Chipper</strain>
        <strain>cv. Gy14</strain>
    </source>
</reference>